<proteinExistence type="evidence at transcript level"/>
<organism>
    <name type="scientific">Rattus norvegicus</name>
    <name type="common">Rat</name>
    <dbReference type="NCBI Taxonomy" id="10116"/>
    <lineage>
        <taxon>Eukaryota</taxon>
        <taxon>Metazoa</taxon>
        <taxon>Chordata</taxon>
        <taxon>Craniata</taxon>
        <taxon>Vertebrata</taxon>
        <taxon>Euteleostomi</taxon>
        <taxon>Mammalia</taxon>
        <taxon>Eutheria</taxon>
        <taxon>Euarchontoglires</taxon>
        <taxon>Glires</taxon>
        <taxon>Rodentia</taxon>
        <taxon>Myomorpha</taxon>
        <taxon>Muroidea</taxon>
        <taxon>Muridae</taxon>
        <taxon>Murinae</taxon>
        <taxon>Rattus</taxon>
    </lineage>
</organism>
<dbReference type="EC" id="2.4.1.-" evidence="1"/>
<dbReference type="EMBL" id="BC089972">
    <property type="protein sequence ID" value="AAH89972.1"/>
    <property type="molecule type" value="mRNA"/>
</dbReference>
<dbReference type="RefSeq" id="NP_001014212.1">
    <property type="nucleotide sequence ID" value="NM_001014190.1"/>
</dbReference>
<dbReference type="RefSeq" id="XP_006238220.1">
    <property type="nucleotide sequence ID" value="XM_006238158.5"/>
</dbReference>
<dbReference type="RefSeq" id="XP_006238221.1">
    <property type="nucleotide sequence ID" value="XM_006238159.5"/>
</dbReference>
<dbReference type="RefSeq" id="XP_017448961.1">
    <property type="nucleotide sequence ID" value="XM_017593472.1"/>
</dbReference>
<dbReference type="RefSeq" id="XP_017448962.1">
    <property type="nucleotide sequence ID" value="XM_017593473.3"/>
</dbReference>
<dbReference type="RefSeq" id="XP_017448963.1">
    <property type="nucleotide sequence ID" value="XM_017593474.3"/>
</dbReference>
<dbReference type="FunCoup" id="Q5EB73">
    <property type="interactions" value="1043"/>
</dbReference>
<dbReference type="STRING" id="10116.ENSRNOP00000008883"/>
<dbReference type="PhosphoSitePlus" id="Q5EB73"/>
<dbReference type="PaxDb" id="10116-ENSRNOP00000008883"/>
<dbReference type="Ensembl" id="ENSRNOT00000008883.8">
    <property type="protein sequence ID" value="ENSRNOP00000008883.5"/>
    <property type="gene ID" value="ENSRNOG00000006800.8"/>
</dbReference>
<dbReference type="Ensembl" id="ENSRNOT00000104584.1">
    <property type="protein sequence ID" value="ENSRNOP00000097268.1"/>
    <property type="gene ID" value="ENSRNOG00000006800.8"/>
</dbReference>
<dbReference type="GeneID" id="362518"/>
<dbReference type="KEGG" id="rno:362518"/>
<dbReference type="UCSC" id="RGD:1307218">
    <property type="organism name" value="rat"/>
</dbReference>
<dbReference type="AGR" id="RGD:1307218"/>
<dbReference type="CTD" id="84302"/>
<dbReference type="RGD" id="1307218">
    <property type="gene designation" value="Pgap4"/>
</dbReference>
<dbReference type="eggNOG" id="ENOG502QT3K">
    <property type="taxonomic scope" value="Eukaryota"/>
</dbReference>
<dbReference type="GeneTree" id="ENSGT00500000045018"/>
<dbReference type="HOGENOM" id="CLU_049086_0_0_1"/>
<dbReference type="InParanoid" id="Q5EB73"/>
<dbReference type="OMA" id="YWNPCSF"/>
<dbReference type="OrthoDB" id="5184at9989"/>
<dbReference type="PhylomeDB" id="Q5EB73"/>
<dbReference type="PRO" id="PR:Q5EB73"/>
<dbReference type="Proteomes" id="UP000002494">
    <property type="component" value="Chromosome 5"/>
</dbReference>
<dbReference type="Bgee" id="ENSRNOG00000006800">
    <property type="expression patterns" value="Expressed in colon and 20 other cell types or tissues"/>
</dbReference>
<dbReference type="GO" id="GO:0000139">
    <property type="term" value="C:Golgi membrane"/>
    <property type="evidence" value="ECO:0000250"/>
    <property type="project" value="UniProtKB"/>
</dbReference>
<dbReference type="GO" id="GO:0016757">
    <property type="term" value="F:glycosyltransferase activity"/>
    <property type="evidence" value="ECO:0000250"/>
    <property type="project" value="UniProtKB"/>
</dbReference>
<dbReference type="GO" id="GO:0006506">
    <property type="term" value="P:GPI anchor biosynthetic process"/>
    <property type="evidence" value="ECO:0000250"/>
    <property type="project" value="UniProtKB"/>
</dbReference>
<dbReference type="CDD" id="cd22190">
    <property type="entry name" value="PGAP4"/>
    <property type="match status" value="1"/>
</dbReference>
<dbReference type="InterPro" id="IPR029675">
    <property type="entry name" value="PGAP4"/>
</dbReference>
<dbReference type="PANTHER" id="PTHR31410:SF1">
    <property type="entry name" value="POST-GPI ATTACHMENT TO PROTEINS FACTOR 4"/>
    <property type="match status" value="1"/>
</dbReference>
<dbReference type="PANTHER" id="PTHR31410">
    <property type="entry name" value="TRANSMEMBRANE PROTEIN 246"/>
    <property type="match status" value="1"/>
</dbReference>
<comment type="function">
    <text evidence="1">Golgi-resident glycosylphosphatidylinositol (GPI)-N-acetylgalactosamine transferase that catalyzes the N-acetyl-beta-D-galactosamine transfer from an UDP-N-acetyl-alpha-D-galactosamine to the 4-OH-position of first mannose of the glycosylphosphatidylinositol (GPI) of a GPI-anchored protein (GPI-AP). This modification occurs after the fatty acid remodeling step of the GPI-anchor maturation.</text>
</comment>
<comment type="subcellular location">
    <subcellularLocation>
        <location evidence="1">Golgi apparatus membrane</location>
        <topology evidence="2">Multi-pass membrane protein</topology>
    </subcellularLocation>
</comment>
<comment type="domain">
    <text evidence="1">Contains three transmembrane domains, including a tandem transmembrane domain insertion into its glycosyltransferase-A fold. Transmembrane domain 1 functions as a signal for Golgi targeting.</text>
</comment>
<comment type="domain">
    <text evidence="1">The conserved DXD motif is involved in enzyme activity.</text>
</comment>
<comment type="PTM">
    <text evidence="1">Glycosylated.</text>
</comment>
<comment type="similarity">
    <text evidence="3">Belongs to the PGAP4 family.</text>
</comment>
<sequence>MTTSTSPAAMLLRRLRRLSWGSTAVQLFILTVVTFGLLAPLACHRLLHSYFYLRHWHLNQMSQDFLQQSLKEGEAALHYFEELPSANGSVPIVWQATPRPWLVITIITVDRQPGFHYVLQVVSQFHRLLQQCGPQCEGHQLFLCNVERSVSHFDAKLLSKYVPVANRYEGTEDDYGDDPSTNSFEKEKQDYVYCLESSLQTYNPDYVLMVEDDAIPEEQIFPVLEHLLRARFSEPHLQDALYLKLYHPERLQHYINPEPMRILEWVGVGMLLGPVLTWIYMRFACRPGFSWPVMLFFCLYSMGLVELVGRHYFLELRRLSPSLYSVVPASQCCTPAMLFPAPAARRTLTYLSQVYCHKGFGKDMALYSLLRAKGERAYVVEPNLVKHIGLFSSLRYNFHPSLL</sequence>
<gene>
    <name evidence="4" type="primary">Pgap4</name>
    <name type="synonym">Tmem246</name>
</gene>
<evidence type="ECO:0000250" key="1">
    <source>
        <dbReference type="UniProtKB" id="Q9BRR3"/>
    </source>
</evidence>
<evidence type="ECO:0000255" key="2"/>
<evidence type="ECO:0000305" key="3"/>
<evidence type="ECO:0000312" key="4">
    <source>
        <dbReference type="RGD" id="1307218"/>
    </source>
</evidence>
<keyword id="KW-1015">Disulfide bond</keyword>
<keyword id="KW-0333">Golgi apparatus</keyword>
<keyword id="KW-0472">Membrane</keyword>
<keyword id="KW-1185">Reference proteome</keyword>
<keyword id="KW-0808">Transferase</keyword>
<keyword id="KW-0812">Transmembrane</keyword>
<keyword id="KW-1133">Transmembrane helix</keyword>
<reference key="1">
    <citation type="journal article" date="2004" name="Genome Res.">
        <title>The status, quality, and expansion of the NIH full-length cDNA project: the Mammalian Gene Collection (MGC).</title>
        <authorList>
            <consortium name="The MGC Project Team"/>
        </authorList>
    </citation>
    <scope>NUCLEOTIDE SEQUENCE [LARGE SCALE MRNA]</scope>
    <source>
        <tissue>Brain</tissue>
    </source>
</reference>
<accession>Q5EB73</accession>
<feature type="chain" id="PRO_0000089734" description="GPI-N-acetylgalactosamine transferase PGAP4">
    <location>
        <begin position="1"/>
        <end position="403"/>
    </location>
</feature>
<feature type="topological domain" description="Cytoplasmic" evidence="1">
    <location>
        <begin position="1"/>
        <end position="22"/>
    </location>
</feature>
<feature type="transmembrane region" description="Helical" evidence="2">
    <location>
        <begin position="23"/>
        <end position="43"/>
    </location>
</feature>
<feature type="topological domain" description="Lumenal" evidence="1">
    <location>
        <begin position="44"/>
        <end position="264"/>
    </location>
</feature>
<feature type="transmembrane region" description="Helical" evidence="2">
    <location>
        <begin position="265"/>
        <end position="285"/>
    </location>
</feature>
<feature type="topological domain" description="Cytoplasmic" evidence="1">
    <location>
        <begin position="286"/>
        <end position="287"/>
    </location>
</feature>
<feature type="transmembrane region" description="Helical" evidence="2">
    <location>
        <begin position="288"/>
        <end position="308"/>
    </location>
</feature>
<feature type="topological domain" description="Lumenal" evidence="1">
    <location>
        <begin position="309"/>
        <end position="403"/>
    </location>
</feature>
<feature type="short sequence motif" description="DXD motif" evidence="1">
    <location>
        <begin position="211"/>
        <end position="213"/>
    </location>
</feature>
<feature type="binding site" evidence="1">
    <location>
        <position position="109"/>
    </location>
    <ligand>
        <name>UDP-N-acetyl-alpha-D-galactosamine</name>
        <dbReference type="ChEBI" id="CHEBI:67138"/>
    </ligand>
</feature>
<feature type="binding site" evidence="1">
    <location>
        <position position="334"/>
    </location>
    <ligand>
        <name>UDP-N-acetyl-alpha-D-galactosamine</name>
        <dbReference type="ChEBI" id="CHEBI:67138"/>
    </ligand>
</feature>
<feature type="binding site" evidence="1">
    <location>
        <position position="335"/>
    </location>
    <ligand>
        <name>UDP-N-acetyl-alpha-D-galactosamine</name>
        <dbReference type="ChEBI" id="CHEBI:67138"/>
    </ligand>
</feature>
<feature type="binding site" evidence="1">
    <location>
        <position position="362"/>
    </location>
    <ligand>
        <name>UDP-N-acetyl-alpha-D-galactosamine</name>
        <dbReference type="ChEBI" id="CHEBI:67138"/>
    </ligand>
</feature>
<feature type="disulfide bond" evidence="1">
    <location>
        <begin position="132"/>
        <end position="136"/>
    </location>
</feature>
<feature type="disulfide bond" evidence="1">
    <location>
        <begin position="144"/>
        <end position="194"/>
    </location>
</feature>
<feature type="disulfide bond" evidence="1">
    <location>
        <begin position="332"/>
        <end position="333"/>
    </location>
</feature>
<name>PGAP4_RAT</name>
<protein>
    <recommendedName>
        <fullName evidence="3">GPI-N-acetylgalactosamine transferase PGAP4</fullName>
        <shortName evidence="1">GPI-GalNAc transferase PGAP4</shortName>
        <ecNumber evidence="1">2.4.1.-</ecNumber>
    </recommendedName>
    <alternativeName>
        <fullName evidence="3">Post-GPI attachment to proteins GalNAc transferase 4</fullName>
    </alternativeName>
    <alternativeName>
        <fullName evidence="3">Post-GPI attachment to proteins factor 4</fullName>
    </alternativeName>
    <alternativeName>
        <fullName>Transmembrane protein 246</fullName>
    </alternativeName>
</protein>